<dbReference type="EC" id="6.1.1.19" evidence="1"/>
<dbReference type="EMBL" id="CP001348">
    <property type="protein sequence ID" value="ACL74672.1"/>
    <property type="molecule type" value="Genomic_DNA"/>
</dbReference>
<dbReference type="RefSeq" id="WP_012634737.1">
    <property type="nucleotide sequence ID" value="NC_011898.1"/>
</dbReference>
<dbReference type="SMR" id="B8I592"/>
<dbReference type="STRING" id="394503.Ccel_0285"/>
<dbReference type="KEGG" id="cce:Ccel_0285"/>
<dbReference type="eggNOG" id="COG0018">
    <property type="taxonomic scope" value="Bacteria"/>
</dbReference>
<dbReference type="HOGENOM" id="CLU_006406_0_1_9"/>
<dbReference type="OrthoDB" id="9805987at2"/>
<dbReference type="Proteomes" id="UP000001349">
    <property type="component" value="Chromosome"/>
</dbReference>
<dbReference type="GO" id="GO:0005737">
    <property type="term" value="C:cytoplasm"/>
    <property type="evidence" value="ECO:0007669"/>
    <property type="project" value="UniProtKB-SubCell"/>
</dbReference>
<dbReference type="GO" id="GO:0004814">
    <property type="term" value="F:arginine-tRNA ligase activity"/>
    <property type="evidence" value="ECO:0007669"/>
    <property type="project" value="UniProtKB-UniRule"/>
</dbReference>
<dbReference type="GO" id="GO:0005524">
    <property type="term" value="F:ATP binding"/>
    <property type="evidence" value="ECO:0007669"/>
    <property type="project" value="UniProtKB-UniRule"/>
</dbReference>
<dbReference type="GO" id="GO:0006420">
    <property type="term" value="P:arginyl-tRNA aminoacylation"/>
    <property type="evidence" value="ECO:0007669"/>
    <property type="project" value="UniProtKB-UniRule"/>
</dbReference>
<dbReference type="CDD" id="cd07956">
    <property type="entry name" value="Anticodon_Ia_Arg"/>
    <property type="match status" value="1"/>
</dbReference>
<dbReference type="CDD" id="cd00671">
    <property type="entry name" value="ArgRS_core"/>
    <property type="match status" value="1"/>
</dbReference>
<dbReference type="FunFam" id="1.10.730.10:FF:000008">
    <property type="entry name" value="Arginine--tRNA ligase"/>
    <property type="match status" value="1"/>
</dbReference>
<dbReference type="FunFam" id="3.30.1360.70:FF:000003">
    <property type="entry name" value="Arginine--tRNA ligase"/>
    <property type="match status" value="1"/>
</dbReference>
<dbReference type="FunFam" id="3.40.50.620:FF:000062">
    <property type="entry name" value="Arginine--tRNA ligase"/>
    <property type="match status" value="1"/>
</dbReference>
<dbReference type="Gene3D" id="3.30.1360.70">
    <property type="entry name" value="Arginyl tRNA synthetase N-terminal domain"/>
    <property type="match status" value="1"/>
</dbReference>
<dbReference type="Gene3D" id="3.40.50.620">
    <property type="entry name" value="HUPs"/>
    <property type="match status" value="1"/>
</dbReference>
<dbReference type="Gene3D" id="1.10.730.10">
    <property type="entry name" value="Isoleucyl-tRNA Synthetase, Domain 1"/>
    <property type="match status" value="1"/>
</dbReference>
<dbReference type="HAMAP" id="MF_00123">
    <property type="entry name" value="Arg_tRNA_synth"/>
    <property type="match status" value="1"/>
</dbReference>
<dbReference type="InterPro" id="IPR001412">
    <property type="entry name" value="aa-tRNA-synth_I_CS"/>
</dbReference>
<dbReference type="InterPro" id="IPR001278">
    <property type="entry name" value="Arg-tRNA-ligase"/>
</dbReference>
<dbReference type="InterPro" id="IPR005148">
    <property type="entry name" value="Arg-tRNA-synth_N"/>
</dbReference>
<dbReference type="InterPro" id="IPR036695">
    <property type="entry name" value="Arg-tRNA-synth_N_sf"/>
</dbReference>
<dbReference type="InterPro" id="IPR035684">
    <property type="entry name" value="ArgRS_core"/>
</dbReference>
<dbReference type="InterPro" id="IPR008909">
    <property type="entry name" value="DALR_anticod-bd"/>
</dbReference>
<dbReference type="InterPro" id="IPR014729">
    <property type="entry name" value="Rossmann-like_a/b/a_fold"/>
</dbReference>
<dbReference type="InterPro" id="IPR009080">
    <property type="entry name" value="tRNAsynth_Ia_anticodon-bd"/>
</dbReference>
<dbReference type="NCBIfam" id="TIGR00456">
    <property type="entry name" value="argS"/>
    <property type="match status" value="1"/>
</dbReference>
<dbReference type="PANTHER" id="PTHR11956:SF5">
    <property type="entry name" value="ARGININE--TRNA LIGASE, CYTOPLASMIC"/>
    <property type="match status" value="1"/>
</dbReference>
<dbReference type="PANTHER" id="PTHR11956">
    <property type="entry name" value="ARGINYL-TRNA SYNTHETASE"/>
    <property type="match status" value="1"/>
</dbReference>
<dbReference type="Pfam" id="PF03485">
    <property type="entry name" value="Arg_tRNA_synt_N"/>
    <property type="match status" value="1"/>
</dbReference>
<dbReference type="Pfam" id="PF05746">
    <property type="entry name" value="DALR_1"/>
    <property type="match status" value="1"/>
</dbReference>
<dbReference type="Pfam" id="PF00750">
    <property type="entry name" value="tRNA-synt_1d"/>
    <property type="match status" value="1"/>
</dbReference>
<dbReference type="PRINTS" id="PR01038">
    <property type="entry name" value="TRNASYNTHARG"/>
</dbReference>
<dbReference type="SMART" id="SM01016">
    <property type="entry name" value="Arg_tRNA_synt_N"/>
    <property type="match status" value="1"/>
</dbReference>
<dbReference type="SMART" id="SM00836">
    <property type="entry name" value="DALR_1"/>
    <property type="match status" value="1"/>
</dbReference>
<dbReference type="SUPFAM" id="SSF47323">
    <property type="entry name" value="Anticodon-binding domain of a subclass of class I aminoacyl-tRNA synthetases"/>
    <property type="match status" value="1"/>
</dbReference>
<dbReference type="SUPFAM" id="SSF55190">
    <property type="entry name" value="Arginyl-tRNA synthetase (ArgRS), N-terminal 'additional' domain"/>
    <property type="match status" value="1"/>
</dbReference>
<dbReference type="SUPFAM" id="SSF52374">
    <property type="entry name" value="Nucleotidylyl transferase"/>
    <property type="match status" value="1"/>
</dbReference>
<dbReference type="PROSITE" id="PS00178">
    <property type="entry name" value="AA_TRNA_LIGASE_I"/>
    <property type="match status" value="1"/>
</dbReference>
<accession>B8I592</accession>
<proteinExistence type="inferred from homology"/>
<name>SYR_RUMCH</name>
<comment type="catalytic activity">
    <reaction evidence="1">
        <text>tRNA(Arg) + L-arginine + ATP = L-arginyl-tRNA(Arg) + AMP + diphosphate</text>
        <dbReference type="Rhea" id="RHEA:20301"/>
        <dbReference type="Rhea" id="RHEA-COMP:9658"/>
        <dbReference type="Rhea" id="RHEA-COMP:9673"/>
        <dbReference type="ChEBI" id="CHEBI:30616"/>
        <dbReference type="ChEBI" id="CHEBI:32682"/>
        <dbReference type="ChEBI" id="CHEBI:33019"/>
        <dbReference type="ChEBI" id="CHEBI:78442"/>
        <dbReference type="ChEBI" id="CHEBI:78513"/>
        <dbReference type="ChEBI" id="CHEBI:456215"/>
        <dbReference type="EC" id="6.1.1.19"/>
    </reaction>
</comment>
<comment type="subunit">
    <text evidence="1">Monomer.</text>
</comment>
<comment type="subcellular location">
    <subcellularLocation>
        <location evidence="1">Cytoplasm</location>
    </subcellularLocation>
</comment>
<comment type="similarity">
    <text evidence="1">Belongs to the class-I aminoacyl-tRNA synthetase family.</text>
</comment>
<organism>
    <name type="scientific">Ruminiclostridium cellulolyticum (strain ATCC 35319 / DSM 5812 / JCM 6584 / H10)</name>
    <name type="common">Clostridium cellulolyticum</name>
    <dbReference type="NCBI Taxonomy" id="394503"/>
    <lineage>
        <taxon>Bacteria</taxon>
        <taxon>Bacillati</taxon>
        <taxon>Bacillota</taxon>
        <taxon>Clostridia</taxon>
        <taxon>Eubacteriales</taxon>
        <taxon>Oscillospiraceae</taxon>
        <taxon>Ruminiclostridium</taxon>
    </lineage>
</organism>
<reference key="1">
    <citation type="submission" date="2009-01" db="EMBL/GenBank/DDBJ databases">
        <title>Complete sequence of Clostridium cellulolyticum H10.</title>
        <authorList>
            <consortium name="US DOE Joint Genome Institute"/>
            <person name="Lucas S."/>
            <person name="Copeland A."/>
            <person name="Lapidus A."/>
            <person name="Glavina del Rio T."/>
            <person name="Dalin E."/>
            <person name="Tice H."/>
            <person name="Bruce D."/>
            <person name="Goodwin L."/>
            <person name="Pitluck S."/>
            <person name="Chertkov O."/>
            <person name="Saunders E."/>
            <person name="Brettin T."/>
            <person name="Detter J.C."/>
            <person name="Han C."/>
            <person name="Larimer F."/>
            <person name="Land M."/>
            <person name="Hauser L."/>
            <person name="Kyrpides N."/>
            <person name="Ivanova N."/>
            <person name="Zhou J."/>
            <person name="Richardson P."/>
        </authorList>
    </citation>
    <scope>NUCLEOTIDE SEQUENCE [LARGE SCALE GENOMIC DNA]</scope>
    <source>
        <strain>ATCC 35319 / DSM 5812 / JCM 6584 / H10</strain>
    </source>
</reference>
<gene>
    <name evidence="1" type="primary">argS</name>
    <name type="ordered locus">Ccel_0285</name>
</gene>
<evidence type="ECO:0000255" key="1">
    <source>
        <dbReference type="HAMAP-Rule" id="MF_00123"/>
    </source>
</evidence>
<sequence>MKNINSEIRQQIRNAVINSINKSVETGELPSLEVTDITIEIPREKGHGDFSTNVAMQITKAAKKAPRQIADIIIKNIVTDGTYIDKVTCAGPGFINFTLDNSYLYETVNIIQQEKENYGRINIGNGKKVMVEFVSANPTGPLHMGNARGGALGDCIASVLDAAGYNVTREFLINDAGNQIEKFGTSLEARYIQLIKGEDAIEFPEDGYQGEDITEHMKDFIAIHGDKYINTDSEERKKVFVDFALPRNIARIKEGLESYGIHFDIWFSEQSLHKSGEVAETIQLLKDRGCTVEKEGALWLKGSVIGSEKDEVLVRNNGIPTYFAADIAYHRNKFEKRGFEWVINLWGADHHGHVARMKAAMAALGINPDKLDVVLFQLVRLYRNGEIARMSKRTGKSISLMDLVEEVGRDGVRYFFNTKASGSHLDFDLDLAVKQSNENPVFYVQYAHARICSMFKLLESEGIKVPSANAIKAELLDKPEELELIRKLSEYPDEVRISAETLEPSRLTRYVHDVASTFHSFYNACRVRGEEEELMQARLVLVDCTRIVVKNVLDLLSITAPERM</sequence>
<feature type="chain" id="PRO_1000198886" description="Arginine--tRNA ligase">
    <location>
        <begin position="1"/>
        <end position="564"/>
    </location>
</feature>
<feature type="short sequence motif" description="'HIGH' region">
    <location>
        <begin position="136"/>
        <end position="146"/>
    </location>
</feature>
<keyword id="KW-0030">Aminoacyl-tRNA synthetase</keyword>
<keyword id="KW-0067">ATP-binding</keyword>
<keyword id="KW-0963">Cytoplasm</keyword>
<keyword id="KW-0436">Ligase</keyword>
<keyword id="KW-0547">Nucleotide-binding</keyword>
<keyword id="KW-0648">Protein biosynthesis</keyword>
<keyword id="KW-1185">Reference proteome</keyword>
<protein>
    <recommendedName>
        <fullName evidence="1">Arginine--tRNA ligase</fullName>
        <ecNumber evidence="1">6.1.1.19</ecNumber>
    </recommendedName>
    <alternativeName>
        <fullName evidence="1">Arginyl-tRNA synthetase</fullName>
        <shortName evidence="1">ArgRS</shortName>
    </alternativeName>
</protein>